<reference key="1">
    <citation type="journal article" date="2013" name="PLoS ONE">
        <title>Alpha-actinin is a new type of house dust mite allergen.</title>
        <authorList>
            <person name="An S."/>
            <person name="Shen C."/>
            <person name="Liu X."/>
            <person name="Chen L."/>
            <person name="Xu X."/>
            <person name="Rong M."/>
            <person name="Liu Z."/>
            <person name="Lai R."/>
        </authorList>
    </citation>
    <scope>NUCLEOTIDE SEQUENCE [MRNA]</scope>
    <scope>PROTEIN SEQUENCE OF 263-286; 489-496; 502-511; 513-524; 700-710; 722-733; 737-747 AND 844-856</scope>
    <scope>IDENTIFICATION BY MASS SPECTROMETRY</scope>
    <scope>ALLERGEN</scope>
</reference>
<sequence>MTQDGYMQQEEEEWEREGLLDPAWEKQQRKTFTAWCNSHLRKAGTQIDNIEEDFRNGLKLMLLLEVISGETLGKPDRGKMRFHKIANVNKALDFIESKGVKLVSIGAEEIVDGNSKMTLGLIWTIILRFAIQDISVEEMTAKEGLLLWCQRKTAPYKNVNVQNFHLSWKDGLAFCALIHRHRPDLIDYGKLRKDNPMDNFNLAFDVAEKHLNIPRMLDAEDVVYTAKPDERAIMTYVSWYYHAFHGAQQAETAANRICKVLKVNQDNERLMEEYERLASDLLEWIRRTTPWLENRTTDNTLPGTQKKLEEFRSYRRQHKPPRVEQKANLETNFNTLQTKLRLSKRPAYMPSEGKMVSDITGAWKGLESAEKGFEEWLLSEMMRLERLDHLAQKFKHKADIHEEWTQGKEEMLVSHDFRQCKLNEIKALKKKHEAFESDLAAHQDRVEQIAAIAQELNALGYHDIASINARCQRICDQWDRLGTLTTRRRQALDEAEQILEKVDLFHLEFAKRAAPFNNWLDETREDLVDMFIVHSIEEIQQLIDAHESFKNTLGEADKEYKTIVGLAQEVQPMATQYQIPGGLENPYTTLTPEVITTKWRDVKQLVPQRDHTLQTELIRQQCNENLRRQFAEKANVVGPWIERQMDAVTAIGMGMQGTLEDQLQRLHEYDQAVVQYRPHVDDLEKIHQEVQEAMIFENRYTQYTMETLRVGWEQLLTSIHRNINEVENQILTRDSKGITQEQLNEFRTSFNHFDKKRTGRLAPEEFKSCLVSLGYNIRNDDRPEFRRILAIVDPNKTGYVHFDAFLDFMTREYTDTDTAEQMIDSFRILAGDKPYITADELRRELPPDQAEYCIRRMTPYNGQCAVPGALDYRSFSTALYGESDL</sequence>
<evidence type="ECO:0000250" key="1">
    <source>
        <dbReference type="UniProtKB" id="P18091"/>
    </source>
</evidence>
<evidence type="ECO:0000250" key="2">
    <source>
        <dbReference type="UniProtKB" id="P35609"/>
    </source>
</evidence>
<evidence type="ECO:0000255" key="3"/>
<evidence type="ECO:0000255" key="4">
    <source>
        <dbReference type="PROSITE-ProRule" id="PRU00044"/>
    </source>
</evidence>
<evidence type="ECO:0000255" key="5">
    <source>
        <dbReference type="PROSITE-ProRule" id="PRU00448"/>
    </source>
</evidence>
<evidence type="ECO:0000269" key="6">
    <source>
    </source>
</evidence>
<evidence type="ECO:0000303" key="7">
    <source>
    </source>
</evidence>
<evidence type="ECO:0000305" key="8"/>
<accession>L7UZ85</accession>
<dbReference type="EMBL" id="KC305498">
    <property type="protein sequence ID" value="AGC56214.1"/>
    <property type="molecule type" value="mRNA"/>
</dbReference>
<dbReference type="SMR" id="L7UZ85"/>
<dbReference type="Allergome" id="11748">
    <property type="allergen name" value="Der f Actinin"/>
</dbReference>
<dbReference type="GO" id="GO:0051015">
    <property type="term" value="F:actin filament binding"/>
    <property type="evidence" value="ECO:0000250"/>
    <property type="project" value="UniProtKB"/>
</dbReference>
<dbReference type="GO" id="GO:0005509">
    <property type="term" value="F:calcium ion binding"/>
    <property type="evidence" value="ECO:0007669"/>
    <property type="project" value="InterPro"/>
</dbReference>
<dbReference type="GO" id="GO:0019863">
    <property type="term" value="F:IgE binding"/>
    <property type="evidence" value="ECO:0000314"/>
    <property type="project" value="UniProtKB"/>
</dbReference>
<dbReference type="GO" id="GO:0051017">
    <property type="term" value="P:actin filament bundle assembly"/>
    <property type="evidence" value="ECO:0000250"/>
    <property type="project" value="UniProtKB"/>
</dbReference>
<dbReference type="CDD" id="cd21214">
    <property type="entry name" value="CH_ACTN_rpt1"/>
    <property type="match status" value="1"/>
</dbReference>
<dbReference type="CDD" id="cd21216">
    <property type="entry name" value="CH_ACTN_rpt2"/>
    <property type="match status" value="1"/>
</dbReference>
<dbReference type="CDD" id="cd00051">
    <property type="entry name" value="EFh"/>
    <property type="match status" value="1"/>
</dbReference>
<dbReference type="CDD" id="cd00176">
    <property type="entry name" value="SPEC"/>
    <property type="match status" value="3"/>
</dbReference>
<dbReference type="FunFam" id="1.10.238.10:FF:000004">
    <property type="entry name" value="Actinin alpha 1"/>
    <property type="match status" value="1"/>
</dbReference>
<dbReference type="FunFam" id="1.10.418.10:FF:000001">
    <property type="entry name" value="Actinin alpha 1"/>
    <property type="match status" value="1"/>
</dbReference>
<dbReference type="FunFam" id="1.20.58.60:FF:000004">
    <property type="entry name" value="Actinin alpha 1"/>
    <property type="match status" value="1"/>
</dbReference>
<dbReference type="FunFam" id="1.20.58.60:FF:000005">
    <property type="entry name" value="Actinin alpha 1"/>
    <property type="match status" value="1"/>
</dbReference>
<dbReference type="FunFam" id="1.10.418.10:FF:000005">
    <property type="entry name" value="Actinin alpha 4"/>
    <property type="match status" value="1"/>
</dbReference>
<dbReference type="FunFam" id="1.20.58.60:FF:000002">
    <property type="entry name" value="Actinin, alpha 1"/>
    <property type="match status" value="1"/>
</dbReference>
<dbReference type="FunFam" id="1.20.58.60:FF:000003">
    <property type="entry name" value="Actinin, alpha 1"/>
    <property type="match status" value="1"/>
</dbReference>
<dbReference type="FunFam" id="1.10.238.10:FF:000148">
    <property type="entry name" value="alpha-actinin, sarcomeric isoform X2"/>
    <property type="match status" value="1"/>
</dbReference>
<dbReference type="Gene3D" id="1.20.58.60">
    <property type="match status" value="4"/>
</dbReference>
<dbReference type="Gene3D" id="1.10.418.10">
    <property type="entry name" value="Calponin-like domain"/>
    <property type="match status" value="2"/>
</dbReference>
<dbReference type="Gene3D" id="1.10.238.10">
    <property type="entry name" value="EF-hand"/>
    <property type="match status" value="2"/>
</dbReference>
<dbReference type="InterPro" id="IPR001589">
    <property type="entry name" value="Actinin_actin-bd_CS"/>
</dbReference>
<dbReference type="InterPro" id="IPR001715">
    <property type="entry name" value="CH_dom"/>
</dbReference>
<dbReference type="InterPro" id="IPR036872">
    <property type="entry name" value="CH_dom_sf"/>
</dbReference>
<dbReference type="InterPro" id="IPR011992">
    <property type="entry name" value="EF-hand-dom_pair"/>
</dbReference>
<dbReference type="InterPro" id="IPR014837">
    <property type="entry name" value="EF-hand_Ca_insen"/>
</dbReference>
<dbReference type="InterPro" id="IPR002048">
    <property type="entry name" value="EF_hand_dom"/>
</dbReference>
<dbReference type="InterPro" id="IPR018159">
    <property type="entry name" value="Spectrin/alpha-actinin"/>
</dbReference>
<dbReference type="InterPro" id="IPR002017">
    <property type="entry name" value="Spectrin_repeat"/>
</dbReference>
<dbReference type="PANTHER" id="PTHR11915">
    <property type="entry name" value="SPECTRIN/FILAMIN RELATED CYTOSKELETAL PROTEIN"/>
    <property type="match status" value="1"/>
</dbReference>
<dbReference type="Pfam" id="PF00307">
    <property type="entry name" value="CH"/>
    <property type="match status" value="2"/>
</dbReference>
<dbReference type="Pfam" id="PF13499">
    <property type="entry name" value="EF-hand_7"/>
    <property type="match status" value="1"/>
</dbReference>
<dbReference type="Pfam" id="PF08726">
    <property type="entry name" value="EFhand_Ca_insen"/>
    <property type="match status" value="1"/>
</dbReference>
<dbReference type="Pfam" id="PF00435">
    <property type="entry name" value="Spectrin"/>
    <property type="match status" value="4"/>
</dbReference>
<dbReference type="SMART" id="SM00033">
    <property type="entry name" value="CH"/>
    <property type="match status" value="2"/>
</dbReference>
<dbReference type="SMART" id="SM00054">
    <property type="entry name" value="EFh"/>
    <property type="match status" value="2"/>
</dbReference>
<dbReference type="SMART" id="SM01184">
    <property type="entry name" value="efhand_Ca_insen"/>
    <property type="match status" value="1"/>
</dbReference>
<dbReference type="SMART" id="SM00150">
    <property type="entry name" value="SPEC"/>
    <property type="match status" value="4"/>
</dbReference>
<dbReference type="SUPFAM" id="SSF47576">
    <property type="entry name" value="Calponin-homology domain, CH-domain"/>
    <property type="match status" value="1"/>
</dbReference>
<dbReference type="SUPFAM" id="SSF47473">
    <property type="entry name" value="EF-hand"/>
    <property type="match status" value="1"/>
</dbReference>
<dbReference type="SUPFAM" id="SSF46966">
    <property type="entry name" value="Spectrin repeat"/>
    <property type="match status" value="4"/>
</dbReference>
<dbReference type="PROSITE" id="PS00019">
    <property type="entry name" value="ACTININ_1"/>
    <property type="match status" value="1"/>
</dbReference>
<dbReference type="PROSITE" id="PS00020">
    <property type="entry name" value="ACTININ_2"/>
    <property type="match status" value="1"/>
</dbReference>
<dbReference type="PROSITE" id="PS50021">
    <property type="entry name" value="CH"/>
    <property type="match status" value="2"/>
</dbReference>
<dbReference type="PROSITE" id="PS50222">
    <property type="entry name" value="EF_HAND_2"/>
    <property type="match status" value="2"/>
</dbReference>
<keyword id="KW-0009">Actin-binding</keyword>
<keyword id="KW-0020">Allergen</keyword>
<keyword id="KW-0106">Calcium</keyword>
<keyword id="KW-0903">Direct protein sequencing</keyword>
<keyword id="KW-0479">Metal-binding</keyword>
<keyword id="KW-0677">Repeat</keyword>
<name>ACTN_DERFA</name>
<proteinExistence type="evidence at protein level"/>
<feature type="chain" id="PRO_0000439247" description="Alpha-actinin">
    <location>
        <begin position="1"/>
        <end position="885"/>
    </location>
</feature>
<feature type="domain" description="Calponin-homology (CH) 1" evidence="4">
    <location>
        <begin position="26"/>
        <end position="130"/>
    </location>
</feature>
<feature type="domain" description="Calponin-homology (CH) 2" evidence="4">
    <location>
        <begin position="139"/>
        <end position="245"/>
    </location>
</feature>
<feature type="repeat" description="Spectrin 1" evidence="3">
    <location>
        <begin position="270"/>
        <end position="377"/>
    </location>
</feature>
<feature type="repeat" description="Spectrin 2" evidence="3">
    <location>
        <begin position="389"/>
        <end position="494"/>
    </location>
</feature>
<feature type="repeat" description="Spectrin 3" evidence="3">
    <location>
        <begin position="508"/>
        <end position="614"/>
    </location>
</feature>
<feature type="repeat" description="Spectrin 4" evidence="3">
    <location>
        <begin position="626"/>
        <end position="727"/>
    </location>
</feature>
<feature type="domain" description="EF-hand 1" evidence="5">
    <location>
        <begin position="741"/>
        <end position="776"/>
    </location>
</feature>
<feature type="domain" description="EF-hand 2" evidence="5">
    <location>
        <begin position="780"/>
        <end position="815"/>
    </location>
</feature>
<feature type="region of interest" description="Actin-binding" evidence="3">
    <location>
        <begin position="1"/>
        <end position="242"/>
    </location>
</feature>
<feature type="binding site" evidence="3">
    <location>
        <position position="754"/>
    </location>
    <ligand>
        <name>Ca(2+)</name>
        <dbReference type="ChEBI" id="CHEBI:29108"/>
        <label>1</label>
    </ligand>
</feature>
<feature type="binding site" evidence="3">
    <location>
        <position position="758"/>
    </location>
    <ligand>
        <name>Ca(2+)</name>
        <dbReference type="ChEBI" id="CHEBI:29108"/>
        <label>1</label>
    </ligand>
</feature>
<feature type="binding site" evidence="3">
    <location>
        <position position="760"/>
    </location>
    <ligand>
        <name>Ca(2+)</name>
        <dbReference type="ChEBI" id="CHEBI:29108"/>
        <label>1</label>
    </ligand>
</feature>
<feature type="binding site" evidence="3">
    <location>
        <position position="765"/>
    </location>
    <ligand>
        <name>Ca(2+)</name>
        <dbReference type="ChEBI" id="CHEBI:29108"/>
        <label>1</label>
    </ligand>
</feature>
<feature type="binding site" evidence="3">
    <location>
        <position position="793"/>
    </location>
    <ligand>
        <name>Ca(2+)</name>
        <dbReference type="ChEBI" id="CHEBI:29108"/>
        <label>2</label>
    </ligand>
</feature>
<feature type="binding site" evidence="3">
    <location>
        <position position="795"/>
    </location>
    <ligand>
        <name>Ca(2+)</name>
        <dbReference type="ChEBI" id="CHEBI:29108"/>
        <label>2</label>
    </ligand>
</feature>
<feature type="binding site" evidence="3">
    <location>
        <position position="797"/>
    </location>
    <ligand>
        <name>Ca(2+)</name>
        <dbReference type="ChEBI" id="CHEBI:29108"/>
        <label>2</label>
    </ligand>
</feature>
<feature type="binding site" evidence="3">
    <location>
        <position position="799"/>
    </location>
    <ligand>
        <name>Ca(2+)</name>
        <dbReference type="ChEBI" id="CHEBI:29108"/>
        <label>2</label>
    </ligand>
</feature>
<organism>
    <name type="scientific">Dermatophagoides farinae</name>
    <name type="common">American house dust mite</name>
    <dbReference type="NCBI Taxonomy" id="6954"/>
    <lineage>
        <taxon>Eukaryota</taxon>
        <taxon>Metazoa</taxon>
        <taxon>Ecdysozoa</taxon>
        <taxon>Arthropoda</taxon>
        <taxon>Chelicerata</taxon>
        <taxon>Arachnida</taxon>
        <taxon>Acari</taxon>
        <taxon>Acariformes</taxon>
        <taxon>Sarcoptiformes</taxon>
        <taxon>Astigmata</taxon>
        <taxon>Psoroptidia</taxon>
        <taxon>Analgoidea</taxon>
        <taxon>Pyroglyphidae</taxon>
        <taxon>Dermatophagoidinae</taxon>
        <taxon>Dermatophagoides</taxon>
    </lineage>
</organism>
<comment type="function">
    <text evidence="1">F-actin cross-linking protein which is thought to anchor actin to a variety of intracellular structures. This is a bundling protein.</text>
</comment>
<comment type="subunit">
    <text evidence="2">Homodimer; antiparallel.</text>
</comment>
<comment type="allergen">
    <text evidence="6">Causes an allergic reaction in human. Binds to IgE. Activates basophils.</text>
</comment>
<comment type="similarity">
    <text evidence="8">Belongs to the alpha-actinin family.</text>
</comment>
<protein>
    <recommendedName>
        <fullName evidence="7">Alpha-actinin</fullName>
    </recommendedName>
    <alternativeName>
        <fullName evidence="8">F-actin cross-linking protein</fullName>
    </alternativeName>
    <allergenName evidence="7">Der f 24</allergenName>
</protein>